<protein>
    <recommendedName>
        <fullName>Dolichyl-diphosphooligosaccharide--protein glycosyltransferase subunit 3</fullName>
    </recommendedName>
    <alternativeName>
        <fullName>Oligosaccharyl transferase 34 kDa subunit</fullName>
    </alternativeName>
    <alternativeName>
        <fullName>Oligosaccharyl transferase subunit OST3</fullName>
    </alternativeName>
    <alternativeName>
        <fullName>Oligosaccharyl transferase subunit gamma</fullName>
    </alternativeName>
</protein>
<reference key="1">
    <citation type="journal article" date="2002" name="Nature">
        <title>The genome sequence of Schizosaccharomyces pombe.</title>
        <authorList>
            <person name="Wood V."/>
            <person name="Gwilliam R."/>
            <person name="Rajandream M.A."/>
            <person name="Lyne M.H."/>
            <person name="Lyne R."/>
            <person name="Stewart A."/>
            <person name="Sgouros J.G."/>
            <person name="Peat N."/>
            <person name="Hayles J."/>
            <person name="Baker S.G."/>
            <person name="Basham D."/>
            <person name="Bowman S."/>
            <person name="Brooks K."/>
            <person name="Brown D."/>
            <person name="Brown S."/>
            <person name="Chillingworth T."/>
            <person name="Churcher C.M."/>
            <person name="Collins M."/>
            <person name="Connor R."/>
            <person name="Cronin A."/>
            <person name="Davis P."/>
            <person name="Feltwell T."/>
            <person name="Fraser A."/>
            <person name="Gentles S."/>
            <person name="Goble A."/>
            <person name="Hamlin N."/>
            <person name="Harris D.E."/>
            <person name="Hidalgo J."/>
            <person name="Hodgson G."/>
            <person name="Holroyd S."/>
            <person name="Hornsby T."/>
            <person name="Howarth S."/>
            <person name="Huckle E.J."/>
            <person name="Hunt S."/>
            <person name="Jagels K."/>
            <person name="James K.D."/>
            <person name="Jones L."/>
            <person name="Jones M."/>
            <person name="Leather S."/>
            <person name="McDonald S."/>
            <person name="McLean J."/>
            <person name="Mooney P."/>
            <person name="Moule S."/>
            <person name="Mungall K.L."/>
            <person name="Murphy L.D."/>
            <person name="Niblett D."/>
            <person name="Odell C."/>
            <person name="Oliver K."/>
            <person name="O'Neil S."/>
            <person name="Pearson D."/>
            <person name="Quail M.A."/>
            <person name="Rabbinowitsch E."/>
            <person name="Rutherford K.M."/>
            <person name="Rutter S."/>
            <person name="Saunders D."/>
            <person name="Seeger K."/>
            <person name="Sharp S."/>
            <person name="Skelton J."/>
            <person name="Simmonds M.N."/>
            <person name="Squares R."/>
            <person name="Squares S."/>
            <person name="Stevens K."/>
            <person name="Taylor K."/>
            <person name="Taylor R.G."/>
            <person name="Tivey A."/>
            <person name="Walsh S.V."/>
            <person name="Warren T."/>
            <person name="Whitehead S."/>
            <person name="Woodward J.R."/>
            <person name="Volckaert G."/>
            <person name="Aert R."/>
            <person name="Robben J."/>
            <person name="Grymonprez B."/>
            <person name="Weltjens I."/>
            <person name="Vanstreels E."/>
            <person name="Rieger M."/>
            <person name="Schaefer M."/>
            <person name="Mueller-Auer S."/>
            <person name="Gabel C."/>
            <person name="Fuchs M."/>
            <person name="Duesterhoeft A."/>
            <person name="Fritzc C."/>
            <person name="Holzer E."/>
            <person name="Moestl D."/>
            <person name="Hilbert H."/>
            <person name="Borzym K."/>
            <person name="Langer I."/>
            <person name="Beck A."/>
            <person name="Lehrach H."/>
            <person name="Reinhardt R."/>
            <person name="Pohl T.M."/>
            <person name="Eger P."/>
            <person name="Zimmermann W."/>
            <person name="Wedler H."/>
            <person name="Wambutt R."/>
            <person name="Purnelle B."/>
            <person name="Goffeau A."/>
            <person name="Cadieu E."/>
            <person name="Dreano S."/>
            <person name="Gloux S."/>
            <person name="Lelaure V."/>
            <person name="Mottier S."/>
            <person name="Galibert F."/>
            <person name="Aves S.J."/>
            <person name="Xiang Z."/>
            <person name="Hunt C."/>
            <person name="Moore K."/>
            <person name="Hurst S.M."/>
            <person name="Lucas M."/>
            <person name="Rochet M."/>
            <person name="Gaillardin C."/>
            <person name="Tallada V.A."/>
            <person name="Garzon A."/>
            <person name="Thode G."/>
            <person name="Daga R.R."/>
            <person name="Cruzado L."/>
            <person name="Jimenez J."/>
            <person name="Sanchez M."/>
            <person name="del Rey F."/>
            <person name="Benito J."/>
            <person name="Dominguez A."/>
            <person name="Revuelta J.L."/>
            <person name="Moreno S."/>
            <person name="Armstrong J."/>
            <person name="Forsburg S.L."/>
            <person name="Cerutti L."/>
            <person name="Lowe T."/>
            <person name="McCombie W.R."/>
            <person name="Paulsen I."/>
            <person name="Potashkin J."/>
            <person name="Shpakovski G.V."/>
            <person name="Ussery D."/>
            <person name="Barrell B.G."/>
            <person name="Nurse P."/>
        </authorList>
    </citation>
    <scope>NUCLEOTIDE SEQUENCE [LARGE SCALE GENOMIC DNA]</scope>
    <source>
        <strain>972 / ATCC 24843</strain>
    </source>
</reference>
<reference key="2">
    <citation type="journal article" date="2006" name="Nat. Biotechnol.">
        <title>ORFeome cloning and global analysis of protein localization in the fission yeast Schizosaccharomyces pombe.</title>
        <authorList>
            <person name="Matsuyama A."/>
            <person name="Arai R."/>
            <person name="Yashiroda Y."/>
            <person name="Shirai A."/>
            <person name="Kamata A."/>
            <person name="Sekido S."/>
            <person name="Kobayashi Y."/>
            <person name="Hashimoto A."/>
            <person name="Hamamoto M."/>
            <person name="Hiraoka Y."/>
            <person name="Horinouchi S."/>
            <person name="Yoshida M."/>
        </authorList>
    </citation>
    <scope>SUBCELLULAR LOCATION [LARGE SCALE ANALYSIS]</scope>
</reference>
<accession>Q8TFH3</accession>
<proteinExistence type="inferred from homology"/>
<keyword id="KW-1015">Disulfide bond</keyword>
<keyword id="KW-0256">Endoplasmic reticulum</keyword>
<keyword id="KW-0472">Membrane</keyword>
<keyword id="KW-1185">Reference proteome</keyword>
<keyword id="KW-0732">Signal</keyword>
<keyword id="KW-0812">Transmembrane</keyword>
<keyword id="KW-1133">Transmembrane helix</keyword>
<organism>
    <name type="scientific">Schizosaccharomyces pombe (strain 972 / ATCC 24843)</name>
    <name type="common">Fission yeast</name>
    <dbReference type="NCBI Taxonomy" id="284812"/>
    <lineage>
        <taxon>Eukaryota</taxon>
        <taxon>Fungi</taxon>
        <taxon>Dikarya</taxon>
        <taxon>Ascomycota</taxon>
        <taxon>Taphrinomycotina</taxon>
        <taxon>Schizosaccharomycetes</taxon>
        <taxon>Schizosaccharomycetales</taxon>
        <taxon>Schizosaccharomycetaceae</taxon>
        <taxon>Schizosaccharomyces</taxon>
    </lineage>
</organism>
<feature type="signal peptide" evidence="3">
    <location>
        <begin position="1"/>
        <end position="19"/>
    </location>
</feature>
<feature type="chain" id="PRO_0000372619" description="Dolichyl-diphosphooligosaccharide--protein glycosyltransferase subunit 3">
    <location>
        <begin position="20"/>
        <end position="309"/>
    </location>
</feature>
<feature type="transmembrane region" description="Helical" evidence="3">
    <location>
        <begin position="165"/>
        <end position="185"/>
    </location>
</feature>
<feature type="transmembrane region" description="Helical" evidence="3">
    <location>
        <begin position="193"/>
        <end position="213"/>
    </location>
</feature>
<feature type="transmembrane region" description="Helical" evidence="3">
    <location>
        <begin position="246"/>
        <end position="266"/>
    </location>
</feature>
<feature type="transmembrane region" description="Helical" evidence="3">
    <location>
        <begin position="276"/>
        <end position="296"/>
    </location>
</feature>
<feature type="domain" description="Thioredoxin">
    <location>
        <begin position="29"/>
        <end position="150"/>
    </location>
</feature>
<feature type="disulfide bond" description="Redox-active" evidence="1">
    <location>
        <begin position="65"/>
        <end position="68"/>
    </location>
</feature>
<name>OST3_SCHPO</name>
<gene>
    <name type="primary">ost3</name>
    <name type="ORF">SPAPB17E12.11</name>
</gene>
<comment type="function">
    <text evidence="2">Subunit of the oligosaccharyl transferase (OST) complex that catalyzes the initial transfer of a defined glycan (Glc(3)Man(9)GlcNAc(2) in eukaryotes) from the lipid carrier dolichol-pyrophosphate to an asparagine residue within an Asn-X-Ser/Thr consensus motif in nascent polypeptide chains, the first step in protein N-glycosylation. N-glycosylation occurs cotranslationally and the complex associates with the Sec61 complex at the channel-forming translocon complex that mediates protein translocation across the endoplasmic reticulum (ER). All subunits are required for a maximal enzyme activity.</text>
</comment>
<comment type="pathway">
    <text>Protein modification; protein glycosylation.</text>
</comment>
<comment type="subunit">
    <text evidence="2">Component of the oligosaccharyltransferase (OST) complex.</text>
</comment>
<comment type="subcellular location">
    <subcellularLocation>
        <location evidence="4">Endoplasmic reticulum membrane</location>
        <topology evidence="4">Multi-pass membrane protein</topology>
    </subcellularLocation>
</comment>
<comment type="similarity">
    <text evidence="5">Belongs to the OST3/OST6 family.</text>
</comment>
<dbReference type="EMBL" id="CU329670">
    <property type="protein sequence ID" value="CAD27504.1"/>
    <property type="molecule type" value="Genomic_DNA"/>
</dbReference>
<dbReference type="RefSeq" id="NP_001018226.1">
    <property type="nucleotide sequence ID" value="NM_001018706.2"/>
</dbReference>
<dbReference type="SMR" id="Q8TFH3"/>
<dbReference type="BioGRID" id="280472">
    <property type="interactions" value="2"/>
</dbReference>
<dbReference type="ComplexPortal" id="CPX-10061">
    <property type="entry name" value="Oligosaccharyltransferase complex"/>
</dbReference>
<dbReference type="FunCoup" id="Q8TFH3">
    <property type="interactions" value="253"/>
</dbReference>
<dbReference type="STRING" id="284812.Q8TFH3"/>
<dbReference type="iPTMnet" id="Q8TFH3"/>
<dbReference type="PaxDb" id="4896-SPAPB17E12.11.1"/>
<dbReference type="EnsemblFungi" id="SPAPB17E12.11.1">
    <property type="protein sequence ID" value="SPAPB17E12.11.1:pep"/>
    <property type="gene ID" value="SPAPB17E12.11"/>
</dbReference>
<dbReference type="GeneID" id="3361396"/>
<dbReference type="KEGG" id="spo:3361396"/>
<dbReference type="PomBase" id="SPAPB17E12.11">
    <property type="gene designation" value="ost3"/>
</dbReference>
<dbReference type="VEuPathDB" id="FungiDB:SPAPB17E12.11"/>
<dbReference type="eggNOG" id="KOG2603">
    <property type="taxonomic scope" value="Eukaryota"/>
</dbReference>
<dbReference type="HOGENOM" id="CLU_052855_1_2_1"/>
<dbReference type="InParanoid" id="Q8TFH3"/>
<dbReference type="OMA" id="VLFGMYS"/>
<dbReference type="PhylomeDB" id="Q8TFH3"/>
<dbReference type="Reactome" id="R-SPO-5223345">
    <property type="pathway name" value="Miscellaneous transport and binding events"/>
</dbReference>
<dbReference type="Reactome" id="R-SPO-6798695">
    <property type="pathway name" value="Neutrophil degranulation"/>
</dbReference>
<dbReference type="UniPathway" id="UPA00378"/>
<dbReference type="PRO" id="PR:Q8TFH3"/>
<dbReference type="Proteomes" id="UP000002485">
    <property type="component" value="Chromosome I"/>
</dbReference>
<dbReference type="GO" id="GO:0005783">
    <property type="term" value="C:endoplasmic reticulum"/>
    <property type="evidence" value="ECO:0007005"/>
    <property type="project" value="PomBase"/>
</dbReference>
<dbReference type="GO" id="GO:0008250">
    <property type="term" value="C:oligosaccharyltransferase complex"/>
    <property type="evidence" value="ECO:0000318"/>
    <property type="project" value="GO_Central"/>
</dbReference>
<dbReference type="GO" id="GO:0018279">
    <property type="term" value="P:protein N-linked glycosylation via asparagine"/>
    <property type="evidence" value="ECO:0000318"/>
    <property type="project" value="GO_Central"/>
</dbReference>
<dbReference type="CDD" id="cd02947">
    <property type="entry name" value="TRX_family"/>
    <property type="match status" value="1"/>
</dbReference>
<dbReference type="Gene3D" id="3.40.30.10">
    <property type="entry name" value="Glutaredoxin"/>
    <property type="match status" value="1"/>
</dbReference>
<dbReference type="InterPro" id="IPR021149">
    <property type="entry name" value="OligosaccharylTrfase_OST3/OST6"/>
</dbReference>
<dbReference type="InterPro" id="IPR036249">
    <property type="entry name" value="Thioredoxin-like_sf"/>
</dbReference>
<dbReference type="PANTHER" id="PTHR12692">
    <property type="entry name" value="DOLICHYL-DIPHOSPHOOLIGOSACCHARIDE--PROTEIN GLYCOSYLTRANSFERASE-RELATED"/>
    <property type="match status" value="1"/>
</dbReference>
<dbReference type="PANTHER" id="PTHR12692:SF0">
    <property type="entry name" value="GH11935P"/>
    <property type="match status" value="1"/>
</dbReference>
<dbReference type="Pfam" id="PF04756">
    <property type="entry name" value="OST3_OST6"/>
    <property type="match status" value="1"/>
</dbReference>
<dbReference type="SUPFAM" id="SSF52833">
    <property type="entry name" value="Thioredoxin-like"/>
    <property type="match status" value="1"/>
</dbReference>
<sequence length="309" mass="34983">MNFFKILSFFSLFVITCFAKLDLNSKTDADGVIQITGRLFHRIVNGKQDFTTVALFSADSSTMNCDVCRLIEPEFKALANSYKLKYGLDSGIRFTYADFGKNKNLFQDFSIESVPNFWIFKPKSIQAIHVDLSHGVTASHLAAIVEKHTGKIADIVYKQDQAKRVGAFLSYIIVGAALFFTRKIIVKIFTSRKVWAALTIITVITLSSGYMFTRIRFSPYSQRGEHGENLWLAGSQQFQFGAEVQVVSLLYTALTMSSIFLAIVAPKVEGAKRQTLFVIIWLAFLWIGYSFLVDIFKRKVSMYPFKLLI</sequence>
<evidence type="ECO:0000250" key="1"/>
<evidence type="ECO:0000250" key="2">
    <source>
        <dbReference type="UniProtKB" id="P48439"/>
    </source>
</evidence>
<evidence type="ECO:0000255" key="3"/>
<evidence type="ECO:0000269" key="4">
    <source>
    </source>
</evidence>
<evidence type="ECO:0000305" key="5"/>